<feature type="chain" id="PRO_1000008145" description="Thiamine-phosphate synthase">
    <location>
        <begin position="1"/>
        <end position="217"/>
    </location>
</feature>
<feature type="binding site" evidence="1">
    <location>
        <begin position="42"/>
        <end position="46"/>
    </location>
    <ligand>
        <name>4-amino-2-methyl-5-(diphosphooxymethyl)pyrimidine</name>
        <dbReference type="ChEBI" id="CHEBI:57841"/>
    </ligand>
</feature>
<feature type="binding site" evidence="1">
    <location>
        <position position="77"/>
    </location>
    <ligand>
        <name>4-amino-2-methyl-5-(diphosphooxymethyl)pyrimidine</name>
        <dbReference type="ChEBI" id="CHEBI:57841"/>
    </ligand>
</feature>
<feature type="binding site" evidence="1">
    <location>
        <position position="78"/>
    </location>
    <ligand>
        <name>Mg(2+)</name>
        <dbReference type="ChEBI" id="CHEBI:18420"/>
    </ligand>
</feature>
<feature type="binding site" evidence="1">
    <location>
        <position position="97"/>
    </location>
    <ligand>
        <name>Mg(2+)</name>
        <dbReference type="ChEBI" id="CHEBI:18420"/>
    </ligand>
</feature>
<feature type="binding site" evidence="1">
    <location>
        <position position="117"/>
    </location>
    <ligand>
        <name>4-amino-2-methyl-5-(diphosphooxymethyl)pyrimidine</name>
        <dbReference type="ChEBI" id="CHEBI:57841"/>
    </ligand>
</feature>
<feature type="binding site" evidence="1">
    <location>
        <begin position="144"/>
        <end position="146"/>
    </location>
    <ligand>
        <name>2-[(2R,5Z)-2-carboxy-4-methylthiazol-5(2H)-ylidene]ethyl phosphate</name>
        <dbReference type="ChEBI" id="CHEBI:62899"/>
    </ligand>
</feature>
<feature type="binding site" evidence="1">
    <location>
        <position position="147"/>
    </location>
    <ligand>
        <name>4-amino-2-methyl-5-(diphosphooxymethyl)pyrimidine</name>
        <dbReference type="ChEBI" id="CHEBI:57841"/>
    </ligand>
</feature>
<feature type="binding site" evidence="1">
    <location>
        <position position="175"/>
    </location>
    <ligand>
        <name>2-[(2R,5Z)-2-carboxy-4-methylthiazol-5(2H)-ylidene]ethyl phosphate</name>
        <dbReference type="ChEBI" id="CHEBI:62899"/>
    </ligand>
</feature>
<feature type="binding site" evidence="1">
    <location>
        <begin position="195"/>
        <end position="196"/>
    </location>
    <ligand>
        <name>2-[(2R,5Z)-2-carboxy-4-methylthiazol-5(2H)-ylidene]ethyl phosphate</name>
        <dbReference type="ChEBI" id="CHEBI:62899"/>
    </ligand>
</feature>
<protein>
    <recommendedName>
        <fullName evidence="1">Thiamine-phosphate synthase</fullName>
        <shortName evidence="1">TP synthase</shortName>
        <shortName evidence="1">TPS</shortName>
        <ecNumber evidence="1">2.5.1.3</ecNumber>
    </recommendedName>
    <alternativeName>
        <fullName evidence="1">Thiamine-phosphate pyrophosphorylase</fullName>
        <shortName evidence="1">TMP pyrophosphorylase</shortName>
        <shortName evidence="1">TMP-PPase</shortName>
    </alternativeName>
</protein>
<name>THIE_LEVBA</name>
<accession>Q03NS1</accession>
<reference key="1">
    <citation type="journal article" date="2006" name="Proc. Natl. Acad. Sci. U.S.A.">
        <title>Comparative genomics of the lactic acid bacteria.</title>
        <authorList>
            <person name="Makarova K.S."/>
            <person name="Slesarev A."/>
            <person name="Wolf Y.I."/>
            <person name="Sorokin A."/>
            <person name="Mirkin B."/>
            <person name="Koonin E.V."/>
            <person name="Pavlov A."/>
            <person name="Pavlova N."/>
            <person name="Karamychev V."/>
            <person name="Polouchine N."/>
            <person name="Shakhova V."/>
            <person name="Grigoriev I."/>
            <person name="Lou Y."/>
            <person name="Rohksar D."/>
            <person name="Lucas S."/>
            <person name="Huang K."/>
            <person name="Goodstein D.M."/>
            <person name="Hawkins T."/>
            <person name="Plengvidhya V."/>
            <person name="Welker D."/>
            <person name="Hughes J."/>
            <person name="Goh Y."/>
            <person name="Benson A."/>
            <person name="Baldwin K."/>
            <person name="Lee J.-H."/>
            <person name="Diaz-Muniz I."/>
            <person name="Dosti B."/>
            <person name="Smeianov V."/>
            <person name="Wechter W."/>
            <person name="Barabote R."/>
            <person name="Lorca G."/>
            <person name="Altermann E."/>
            <person name="Barrangou R."/>
            <person name="Ganesan B."/>
            <person name="Xie Y."/>
            <person name="Rawsthorne H."/>
            <person name="Tamir D."/>
            <person name="Parker C."/>
            <person name="Breidt F."/>
            <person name="Broadbent J.R."/>
            <person name="Hutkins R."/>
            <person name="O'Sullivan D."/>
            <person name="Steele J."/>
            <person name="Unlu G."/>
            <person name="Saier M.H. Jr."/>
            <person name="Klaenhammer T."/>
            <person name="Richardson P."/>
            <person name="Kozyavkin S."/>
            <person name="Weimer B.C."/>
            <person name="Mills D.A."/>
        </authorList>
    </citation>
    <scope>NUCLEOTIDE SEQUENCE [LARGE SCALE GENOMIC DNA]</scope>
    <source>
        <strain>ATCC 367 / BCRC 12310 / CIP 105137 / JCM 1170 / LMG 11437 / NCIMB 947 / NCTC 947</strain>
    </source>
</reference>
<gene>
    <name evidence="1" type="primary">thiE</name>
    <name type="ordered locus">LVIS_2097</name>
</gene>
<keyword id="KW-0460">Magnesium</keyword>
<keyword id="KW-0479">Metal-binding</keyword>
<keyword id="KW-1185">Reference proteome</keyword>
<keyword id="KW-0784">Thiamine biosynthesis</keyword>
<keyword id="KW-0808">Transferase</keyword>
<sequence length="217" mass="22513">MSVTFEPGLLRAYFVAGSQDVPGQDLRDVLAKMLAAGITAFQFRDKATSTLTPEQRLALGRDLRAQCRVANVPFIVDDDVELALALDADGIHVGQSDQRVQQVIQAVAGRNIFVGLSCSTMAEVTAANAIAGIDYIGSGPIFPTISKADADPVVGTAGLQKLVAQSRVPVVAIGGVTVDSLPAIAETGAAGVAVITLLTHSHDVDADTAAMRQAFSK</sequence>
<dbReference type="EC" id="2.5.1.3" evidence="1"/>
<dbReference type="EMBL" id="CP000416">
    <property type="protein sequence ID" value="ABJ65151.1"/>
    <property type="molecule type" value="Genomic_DNA"/>
</dbReference>
<dbReference type="RefSeq" id="WP_011668874.1">
    <property type="nucleotide sequence ID" value="NC_008497.1"/>
</dbReference>
<dbReference type="SMR" id="Q03NS1"/>
<dbReference type="STRING" id="387344.LVIS_2097"/>
<dbReference type="KEGG" id="lbr:LVIS_2097"/>
<dbReference type="PATRIC" id="fig|387344.15.peg.2003"/>
<dbReference type="eggNOG" id="COG0352">
    <property type="taxonomic scope" value="Bacteria"/>
</dbReference>
<dbReference type="HOGENOM" id="CLU_018272_3_2_9"/>
<dbReference type="UniPathway" id="UPA00060">
    <property type="reaction ID" value="UER00141"/>
</dbReference>
<dbReference type="Proteomes" id="UP000001652">
    <property type="component" value="Chromosome"/>
</dbReference>
<dbReference type="GO" id="GO:0005737">
    <property type="term" value="C:cytoplasm"/>
    <property type="evidence" value="ECO:0007669"/>
    <property type="project" value="TreeGrafter"/>
</dbReference>
<dbReference type="GO" id="GO:0000287">
    <property type="term" value="F:magnesium ion binding"/>
    <property type="evidence" value="ECO:0007669"/>
    <property type="project" value="UniProtKB-UniRule"/>
</dbReference>
<dbReference type="GO" id="GO:0004789">
    <property type="term" value="F:thiamine-phosphate diphosphorylase activity"/>
    <property type="evidence" value="ECO:0007669"/>
    <property type="project" value="UniProtKB-UniRule"/>
</dbReference>
<dbReference type="GO" id="GO:0009228">
    <property type="term" value="P:thiamine biosynthetic process"/>
    <property type="evidence" value="ECO:0007669"/>
    <property type="project" value="UniProtKB-KW"/>
</dbReference>
<dbReference type="GO" id="GO:0009229">
    <property type="term" value="P:thiamine diphosphate biosynthetic process"/>
    <property type="evidence" value="ECO:0007669"/>
    <property type="project" value="UniProtKB-UniRule"/>
</dbReference>
<dbReference type="CDD" id="cd00564">
    <property type="entry name" value="TMP_TenI"/>
    <property type="match status" value="1"/>
</dbReference>
<dbReference type="FunFam" id="3.20.20.70:FF:000096">
    <property type="entry name" value="Thiamine-phosphate synthase"/>
    <property type="match status" value="1"/>
</dbReference>
<dbReference type="Gene3D" id="3.20.20.70">
    <property type="entry name" value="Aldolase class I"/>
    <property type="match status" value="1"/>
</dbReference>
<dbReference type="HAMAP" id="MF_00097">
    <property type="entry name" value="TMP_synthase"/>
    <property type="match status" value="1"/>
</dbReference>
<dbReference type="InterPro" id="IPR013785">
    <property type="entry name" value="Aldolase_TIM"/>
</dbReference>
<dbReference type="InterPro" id="IPR036206">
    <property type="entry name" value="ThiamineP_synth_sf"/>
</dbReference>
<dbReference type="InterPro" id="IPR022998">
    <property type="entry name" value="ThiamineP_synth_TenI"/>
</dbReference>
<dbReference type="InterPro" id="IPR034291">
    <property type="entry name" value="TMP_synthase"/>
</dbReference>
<dbReference type="NCBIfam" id="TIGR00693">
    <property type="entry name" value="thiE"/>
    <property type="match status" value="1"/>
</dbReference>
<dbReference type="PANTHER" id="PTHR20857">
    <property type="entry name" value="THIAMINE-PHOSPHATE PYROPHOSPHORYLASE"/>
    <property type="match status" value="1"/>
</dbReference>
<dbReference type="PANTHER" id="PTHR20857:SF15">
    <property type="entry name" value="THIAMINE-PHOSPHATE SYNTHASE"/>
    <property type="match status" value="1"/>
</dbReference>
<dbReference type="Pfam" id="PF02581">
    <property type="entry name" value="TMP-TENI"/>
    <property type="match status" value="1"/>
</dbReference>
<dbReference type="SUPFAM" id="SSF51391">
    <property type="entry name" value="Thiamin phosphate synthase"/>
    <property type="match status" value="1"/>
</dbReference>
<evidence type="ECO:0000255" key="1">
    <source>
        <dbReference type="HAMAP-Rule" id="MF_00097"/>
    </source>
</evidence>
<comment type="function">
    <text evidence="1">Condenses 4-methyl-5-(beta-hydroxyethyl)thiazole monophosphate (THZ-P) and 2-methyl-4-amino-5-hydroxymethyl pyrimidine pyrophosphate (HMP-PP) to form thiamine monophosphate (TMP).</text>
</comment>
<comment type="catalytic activity">
    <reaction evidence="1">
        <text>2-[(2R,5Z)-2-carboxy-4-methylthiazol-5(2H)-ylidene]ethyl phosphate + 4-amino-2-methyl-5-(diphosphooxymethyl)pyrimidine + 2 H(+) = thiamine phosphate + CO2 + diphosphate</text>
        <dbReference type="Rhea" id="RHEA:47844"/>
        <dbReference type="ChEBI" id="CHEBI:15378"/>
        <dbReference type="ChEBI" id="CHEBI:16526"/>
        <dbReference type="ChEBI" id="CHEBI:33019"/>
        <dbReference type="ChEBI" id="CHEBI:37575"/>
        <dbReference type="ChEBI" id="CHEBI:57841"/>
        <dbReference type="ChEBI" id="CHEBI:62899"/>
        <dbReference type="EC" id="2.5.1.3"/>
    </reaction>
</comment>
<comment type="catalytic activity">
    <reaction evidence="1">
        <text>2-(2-carboxy-4-methylthiazol-5-yl)ethyl phosphate + 4-amino-2-methyl-5-(diphosphooxymethyl)pyrimidine + 2 H(+) = thiamine phosphate + CO2 + diphosphate</text>
        <dbReference type="Rhea" id="RHEA:47848"/>
        <dbReference type="ChEBI" id="CHEBI:15378"/>
        <dbReference type="ChEBI" id="CHEBI:16526"/>
        <dbReference type="ChEBI" id="CHEBI:33019"/>
        <dbReference type="ChEBI" id="CHEBI:37575"/>
        <dbReference type="ChEBI" id="CHEBI:57841"/>
        <dbReference type="ChEBI" id="CHEBI:62890"/>
        <dbReference type="EC" id="2.5.1.3"/>
    </reaction>
</comment>
<comment type="catalytic activity">
    <reaction evidence="1">
        <text>4-methyl-5-(2-phosphooxyethyl)-thiazole + 4-amino-2-methyl-5-(diphosphooxymethyl)pyrimidine + H(+) = thiamine phosphate + diphosphate</text>
        <dbReference type="Rhea" id="RHEA:22328"/>
        <dbReference type="ChEBI" id="CHEBI:15378"/>
        <dbReference type="ChEBI" id="CHEBI:33019"/>
        <dbReference type="ChEBI" id="CHEBI:37575"/>
        <dbReference type="ChEBI" id="CHEBI:57841"/>
        <dbReference type="ChEBI" id="CHEBI:58296"/>
        <dbReference type="EC" id="2.5.1.3"/>
    </reaction>
</comment>
<comment type="cofactor">
    <cofactor evidence="1">
        <name>Mg(2+)</name>
        <dbReference type="ChEBI" id="CHEBI:18420"/>
    </cofactor>
    <text evidence="1">Binds 1 Mg(2+) ion per subunit.</text>
</comment>
<comment type="pathway">
    <text evidence="1">Cofactor biosynthesis; thiamine diphosphate biosynthesis; thiamine phosphate from 4-amino-2-methyl-5-diphosphomethylpyrimidine and 4-methyl-5-(2-phosphoethyl)-thiazole: step 1/1.</text>
</comment>
<comment type="similarity">
    <text evidence="1">Belongs to the thiamine-phosphate synthase family.</text>
</comment>
<organism>
    <name type="scientific">Levilactobacillus brevis (strain ATCC 367 / BCRC 12310 / CIP 105137 / JCM 1170 / LMG 11437 / NCIMB 947 / NCTC 947)</name>
    <name type="common">Lactobacillus brevis</name>
    <dbReference type="NCBI Taxonomy" id="387344"/>
    <lineage>
        <taxon>Bacteria</taxon>
        <taxon>Bacillati</taxon>
        <taxon>Bacillota</taxon>
        <taxon>Bacilli</taxon>
        <taxon>Lactobacillales</taxon>
        <taxon>Lactobacillaceae</taxon>
        <taxon>Levilactobacillus</taxon>
    </lineage>
</organism>
<proteinExistence type="inferred from homology"/>